<accession>P52069</accession>
<evidence type="ECO:0000250" key="1"/>
<evidence type="ECO:0000305" key="2"/>
<feature type="chain" id="PRO_0000123842" description="Putative aspartate aminotransferase">
    <location>
        <begin position="1"/>
        <end position="93" status="greater than"/>
    </location>
</feature>
<feature type="non-terminal residue">
    <location>
        <position position="93"/>
    </location>
</feature>
<protein>
    <recommendedName>
        <fullName>Putative aspartate aminotransferase</fullName>
        <shortName>AspAT</shortName>
        <ecNumber>2.6.1.1</ecNumber>
    </recommendedName>
    <alternativeName>
        <fullName>ORF2</fullName>
    </alternativeName>
    <alternativeName>
        <fullName>Transaminase A</fullName>
    </alternativeName>
</protein>
<name>AAT_METEX</name>
<organism>
    <name type="scientific">Methylorubrum extorquens</name>
    <name type="common">Methylobacterium dichloromethanicum</name>
    <name type="synonym">Methylobacterium extorquens</name>
    <dbReference type="NCBI Taxonomy" id="408"/>
    <lineage>
        <taxon>Bacteria</taxon>
        <taxon>Pseudomonadati</taxon>
        <taxon>Pseudomonadota</taxon>
        <taxon>Alphaproteobacteria</taxon>
        <taxon>Hyphomicrobiales</taxon>
        <taxon>Methylobacteriaceae</taxon>
        <taxon>Methylorubrum</taxon>
    </lineage>
</organism>
<sequence>MTDFHRIKRLPPYVFEQVNRIKAAARARGADIIDLGMGNPDLDAPRHVIEKLVETAGKPRTDRYSASKGIAGLRRAQAGYYQRRFGVSLNPDT</sequence>
<keyword id="KW-0032">Aminotransferase</keyword>
<keyword id="KW-0963">Cytoplasm</keyword>
<keyword id="KW-0663">Pyridoxal phosphate</keyword>
<keyword id="KW-0808">Transferase</keyword>
<dbReference type="EC" id="2.6.1.1"/>
<dbReference type="EMBL" id="L07893">
    <property type="protein sequence ID" value="AAA72329.1"/>
    <property type="molecule type" value="Genomic_DNA"/>
</dbReference>
<dbReference type="SMR" id="P52069"/>
<dbReference type="GO" id="GO:0005737">
    <property type="term" value="C:cytoplasm"/>
    <property type="evidence" value="ECO:0007669"/>
    <property type="project" value="UniProtKB-SubCell"/>
</dbReference>
<dbReference type="GO" id="GO:0004069">
    <property type="term" value="F:L-aspartate:2-oxoglutarate aminotransferase activity"/>
    <property type="evidence" value="ECO:0007669"/>
    <property type="project" value="UniProtKB-EC"/>
</dbReference>
<dbReference type="Gene3D" id="3.90.1150.10">
    <property type="entry name" value="Aspartate Aminotransferase, domain 1"/>
    <property type="match status" value="1"/>
</dbReference>
<dbReference type="Gene3D" id="3.40.640.10">
    <property type="entry name" value="Type I PLP-dependent aspartate aminotransferase-like (Major domain)"/>
    <property type="match status" value="1"/>
</dbReference>
<dbReference type="InterPro" id="IPR050881">
    <property type="entry name" value="LL-DAP_aminotransferase"/>
</dbReference>
<dbReference type="InterPro" id="IPR015424">
    <property type="entry name" value="PyrdxlP-dep_Trfase"/>
</dbReference>
<dbReference type="InterPro" id="IPR015421">
    <property type="entry name" value="PyrdxlP-dep_Trfase_major"/>
</dbReference>
<dbReference type="InterPro" id="IPR015422">
    <property type="entry name" value="PyrdxlP-dep_Trfase_small"/>
</dbReference>
<dbReference type="PANTHER" id="PTHR42832">
    <property type="entry name" value="AMINO ACID AMINOTRANSFERASE"/>
    <property type="match status" value="1"/>
</dbReference>
<dbReference type="PANTHER" id="PTHR42832:SF1">
    <property type="entry name" value="GLUTAMATE-PYRUVATE AMINOTRANSFERASE ALAC"/>
    <property type="match status" value="1"/>
</dbReference>
<dbReference type="SUPFAM" id="SSF53383">
    <property type="entry name" value="PLP-dependent transferases"/>
    <property type="match status" value="1"/>
</dbReference>
<comment type="catalytic activity">
    <reaction>
        <text>L-aspartate + 2-oxoglutarate = oxaloacetate + L-glutamate</text>
        <dbReference type="Rhea" id="RHEA:21824"/>
        <dbReference type="ChEBI" id="CHEBI:16452"/>
        <dbReference type="ChEBI" id="CHEBI:16810"/>
        <dbReference type="ChEBI" id="CHEBI:29985"/>
        <dbReference type="ChEBI" id="CHEBI:29991"/>
        <dbReference type="EC" id="2.6.1.1"/>
    </reaction>
</comment>
<comment type="cofactor">
    <cofactor evidence="2">
        <name>pyridoxal 5'-phosphate</name>
        <dbReference type="ChEBI" id="CHEBI:597326"/>
    </cofactor>
</comment>
<comment type="subunit">
    <text evidence="1">Homodimer.</text>
</comment>
<comment type="subcellular location">
    <subcellularLocation>
        <location evidence="1">Cytoplasm</location>
    </subcellularLocation>
</comment>
<comment type="similarity">
    <text evidence="2">Belongs to the class-I pyridoxal-phosphate-dependent aminotransferase family.</text>
</comment>
<reference key="1">
    <citation type="journal article" date="1993" name="Appl. Microbiol. Biotechnol.">
        <title>Cloning and characterization of the Methylobacterium extorquens polyhydroxyalkanoic-acid-synthase structural gene.</title>
        <authorList>
            <person name="Valentin H.E."/>
            <person name="Steinbuechel A."/>
        </authorList>
    </citation>
    <scope>NUCLEOTIDE SEQUENCE [GENOMIC DNA]</scope>
    <source>
        <strain>IBT 6</strain>
    </source>
</reference>
<proteinExistence type="inferred from homology"/>